<gene>
    <name type="primary">PSF1</name>
    <name type="ordered locus">YDR013W</name>
    <name type="ORF">PZA208</name>
    <name type="ORF">YD8119.18</name>
</gene>
<feature type="chain" id="PRO_0000219040" description="DNA replication complex GINS protein PSF1">
    <location>
        <begin position="1"/>
        <end position="208"/>
    </location>
</feature>
<feature type="mutagenesis site" description="In PSF1-1; temperature-sensitive mutant. Defective in DNA replication. Impaired chromatin binding of CDC45." evidence="1">
    <original>R</original>
    <variation>G</variation>
    <location>
        <position position="84"/>
    </location>
</feature>
<feature type="helix" evidence="5">
    <location>
        <begin position="4"/>
        <end position="21"/>
    </location>
</feature>
<feature type="helix" evidence="5">
    <location>
        <begin position="34"/>
        <end position="57"/>
    </location>
</feature>
<feature type="turn" evidence="5">
    <location>
        <begin position="58"/>
        <end position="66"/>
    </location>
</feature>
<feature type="helix" evidence="5">
    <location>
        <begin position="67"/>
        <end position="103"/>
    </location>
</feature>
<feature type="turn" evidence="5">
    <location>
        <begin position="104"/>
        <end position="106"/>
    </location>
</feature>
<feature type="helix" evidence="5">
    <location>
        <begin position="120"/>
        <end position="122"/>
    </location>
</feature>
<feature type="helix" evidence="5">
    <location>
        <begin position="125"/>
        <end position="143"/>
    </location>
</feature>
<feature type="turn" evidence="5">
    <location>
        <begin position="145"/>
        <end position="148"/>
    </location>
</feature>
<feature type="strand" evidence="5">
    <location>
        <begin position="161"/>
        <end position="167"/>
    </location>
</feature>
<feature type="strand" evidence="5">
    <location>
        <begin position="172"/>
        <end position="176"/>
    </location>
</feature>
<feature type="strand" evidence="5">
    <location>
        <begin position="179"/>
        <end position="183"/>
    </location>
</feature>
<feature type="strand" evidence="5">
    <location>
        <begin position="188"/>
        <end position="192"/>
    </location>
</feature>
<feature type="helix" evidence="5">
    <location>
        <begin position="193"/>
        <end position="195"/>
    </location>
</feature>
<feature type="helix" evidence="5">
    <location>
        <begin position="197"/>
        <end position="201"/>
    </location>
</feature>
<dbReference type="EMBL" id="X95966">
    <property type="protein sequence ID" value="CAA65205.1"/>
    <property type="molecule type" value="Genomic_DNA"/>
</dbReference>
<dbReference type="EMBL" id="Z74309">
    <property type="protein sequence ID" value="CAA98833.1"/>
    <property type="molecule type" value="Genomic_DNA"/>
</dbReference>
<dbReference type="EMBL" id="Z48008">
    <property type="protein sequence ID" value="CAA88073.1"/>
    <property type="molecule type" value="Genomic_DNA"/>
</dbReference>
<dbReference type="EMBL" id="AY557650">
    <property type="protein sequence ID" value="AAS55976.1"/>
    <property type="molecule type" value="Genomic_DNA"/>
</dbReference>
<dbReference type="EMBL" id="BK006938">
    <property type="protein sequence ID" value="DAA11859.1"/>
    <property type="molecule type" value="Genomic_DNA"/>
</dbReference>
<dbReference type="PIR" id="S50994">
    <property type="entry name" value="S50994"/>
</dbReference>
<dbReference type="RefSeq" id="NP_010296.3">
    <property type="nucleotide sequence ID" value="NM_001180321.3"/>
</dbReference>
<dbReference type="PDB" id="3JC5">
    <property type="method" value="EM"/>
    <property type="resolution" value="4.70 A"/>
    <property type="chains" value="A=1-206"/>
</dbReference>
<dbReference type="PDB" id="3JC6">
    <property type="method" value="EM"/>
    <property type="resolution" value="3.70 A"/>
    <property type="chains" value="A=1-208"/>
</dbReference>
<dbReference type="PDB" id="3JC7">
    <property type="method" value="EM"/>
    <property type="resolution" value="4.80 A"/>
    <property type="chains" value="A=1-206"/>
</dbReference>
<dbReference type="PDB" id="5U8S">
    <property type="method" value="EM"/>
    <property type="resolution" value="6.10 A"/>
    <property type="chains" value="A=1-208"/>
</dbReference>
<dbReference type="PDB" id="5U8T">
    <property type="method" value="EM"/>
    <property type="resolution" value="4.90 A"/>
    <property type="chains" value="A=1-208"/>
</dbReference>
<dbReference type="PDB" id="6HV9">
    <property type="method" value="EM"/>
    <property type="resolution" value="4.98 A"/>
    <property type="chains" value="C=1-208"/>
</dbReference>
<dbReference type="PDB" id="6PTJ">
    <property type="method" value="EM"/>
    <property type="resolution" value="3.80 A"/>
    <property type="chains" value="A=1-208"/>
</dbReference>
<dbReference type="PDB" id="6PTN">
    <property type="method" value="EM"/>
    <property type="resolution" value="5.80 A"/>
    <property type="chains" value="A/a=1-208"/>
</dbReference>
<dbReference type="PDB" id="6PTO">
    <property type="method" value="EM"/>
    <property type="resolution" value="7.00 A"/>
    <property type="chains" value="A/a/n=1-208"/>
</dbReference>
<dbReference type="PDB" id="6SKL">
    <property type="method" value="EM"/>
    <property type="resolution" value="3.70 A"/>
    <property type="chains" value="A=1-208"/>
</dbReference>
<dbReference type="PDB" id="6U0M">
    <property type="method" value="EM"/>
    <property type="resolution" value="3.90 A"/>
    <property type="chains" value="A=1-208"/>
</dbReference>
<dbReference type="PDB" id="7PMK">
    <property type="method" value="EM"/>
    <property type="resolution" value="3.20 A"/>
    <property type="chains" value="A=1-208"/>
</dbReference>
<dbReference type="PDB" id="7PMN">
    <property type="method" value="EM"/>
    <property type="resolution" value="3.20 A"/>
    <property type="chains" value="A=1-208"/>
</dbReference>
<dbReference type="PDB" id="8B9A">
    <property type="method" value="EM"/>
    <property type="resolution" value="3.50 A"/>
    <property type="chains" value="C=1-208"/>
</dbReference>
<dbReference type="PDB" id="8B9B">
    <property type="method" value="EM"/>
    <property type="resolution" value="3.50 A"/>
    <property type="chains" value="C=1-208"/>
</dbReference>
<dbReference type="PDB" id="8B9C">
    <property type="method" value="EM"/>
    <property type="resolution" value="4.60 A"/>
    <property type="chains" value="C=1-208"/>
</dbReference>
<dbReference type="PDB" id="8KG6">
    <property type="method" value="EM"/>
    <property type="resolution" value="3.07 A"/>
    <property type="chains" value="A=1-208"/>
</dbReference>
<dbReference type="PDB" id="8KG8">
    <property type="method" value="EM"/>
    <property type="resolution" value="4.23 A"/>
    <property type="chains" value="A=1-208"/>
</dbReference>
<dbReference type="PDB" id="8KG9">
    <property type="method" value="EM"/>
    <property type="resolution" value="4.52 A"/>
    <property type="chains" value="A=1-208"/>
</dbReference>
<dbReference type="PDB" id="8P5E">
    <property type="method" value="EM"/>
    <property type="resolution" value="3.90 A"/>
    <property type="chains" value="H=1-208"/>
</dbReference>
<dbReference type="PDB" id="8P62">
    <property type="method" value="EM"/>
    <property type="resolution" value="3.90 A"/>
    <property type="chains" value="H=1-208"/>
</dbReference>
<dbReference type="PDB" id="8P63">
    <property type="method" value="EM"/>
    <property type="resolution" value="3.70 A"/>
    <property type="chains" value="H=1-208"/>
</dbReference>
<dbReference type="PDB" id="8W7M">
    <property type="method" value="EM"/>
    <property type="resolution" value="4.12 A"/>
    <property type="chains" value="A=1-208"/>
</dbReference>
<dbReference type="PDB" id="8W7S">
    <property type="method" value="EM"/>
    <property type="resolution" value="7.39 A"/>
    <property type="chains" value="A=1-208"/>
</dbReference>
<dbReference type="PDB" id="8XGC">
    <property type="method" value="EM"/>
    <property type="resolution" value="3.70 A"/>
    <property type="chains" value="A=1-208"/>
</dbReference>
<dbReference type="PDBsum" id="3JC5"/>
<dbReference type="PDBsum" id="3JC6"/>
<dbReference type="PDBsum" id="3JC7"/>
<dbReference type="PDBsum" id="5U8S"/>
<dbReference type="PDBsum" id="5U8T"/>
<dbReference type="PDBsum" id="6HV9"/>
<dbReference type="PDBsum" id="6PTJ"/>
<dbReference type="PDBsum" id="6PTN"/>
<dbReference type="PDBsum" id="6PTO"/>
<dbReference type="PDBsum" id="6SKL"/>
<dbReference type="PDBsum" id="6U0M"/>
<dbReference type="PDBsum" id="7PMK"/>
<dbReference type="PDBsum" id="7PMN"/>
<dbReference type="PDBsum" id="8B9A"/>
<dbReference type="PDBsum" id="8B9B"/>
<dbReference type="PDBsum" id="8B9C"/>
<dbReference type="PDBsum" id="8KG6"/>
<dbReference type="PDBsum" id="8KG8"/>
<dbReference type="PDBsum" id="8KG9"/>
<dbReference type="PDBsum" id="8P5E"/>
<dbReference type="PDBsum" id="8P62"/>
<dbReference type="PDBsum" id="8P63"/>
<dbReference type="PDBsum" id="8W7M"/>
<dbReference type="PDBsum" id="8W7S"/>
<dbReference type="PDBsum" id="8XGC"/>
<dbReference type="EMDB" id="EMD-0288"/>
<dbReference type="EMDB" id="EMD-10227"/>
<dbReference type="EMDB" id="EMD-13539"/>
<dbReference type="EMDB" id="EMD-15924"/>
<dbReference type="EMDB" id="EMD-17449"/>
<dbReference type="EMDB" id="EMD-17458"/>
<dbReference type="EMDB" id="EMD-17459"/>
<dbReference type="EMDB" id="EMD-20471"/>
<dbReference type="EMDB" id="EMD-20472"/>
<dbReference type="EMDB" id="EMD-20473"/>
<dbReference type="EMDB" id="EMD-20607"/>
<dbReference type="EMDB" id="EMD-37211"/>
<dbReference type="EMDB" id="EMD-37213"/>
<dbReference type="EMDB" id="EMD-37215"/>
<dbReference type="EMDB" id="EMD-37343"/>
<dbReference type="EMDB" id="EMD-37345"/>
<dbReference type="EMDB" id="EMD-38317"/>
<dbReference type="EMDB" id="EMD-8518"/>
<dbReference type="EMDB" id="EMD-8519"/>
<dbReference type="SMR" id="Q12488"/>
<dbReference type="BioGRID" id="32064">
    <property type="interactions" value="297"/>
</dbReference>
<dbReference type="ComplexPortal" id="CPX-1641">
    <property type="entry name" value="GINS complex"/>
</dbReference>
<dbReference type="DIP" id="DIP-1812N"/>
<dbReference type="FunCoup" id="Q12488">
    <property type="interactions" value="541"/>
</dbReference>
<dbReference type="IntAct" id="Q12488">
    <property type="interactions" value="32"/>
</dbReference>
<dbReference type="MINT" id="Q12488"/>
<dbReference type="STRING" id="4932.YDR013W"/>
<dbReference type="iPTMnet" id="Q12488"/>
<dbReference type="PaxDb" id="4932-YDR013W"/>
<dbReference type="PeptideAtlas" id="Q12488"/>
<dbReference type="EnsemblFungi" id="YDR013W_mRNA">
    <property type="protein sequence ID" value="YDR013W"/>
    <property type="gene ID" value="YDR013W"/>
</dbReference>
<dbReference type="GeneID" id="851576"/>
<dbReference type="KEGG" id="sce:YDR013W"/>
<dbReference type="AGR" id="SGD:S000002420"/>
<dbReference type="SGD" id="S000002420">
    <property type="gene designation" value="PSF1"/>
</dbReference>
<dbReference type="VEuPathDB" id="FungiDB:YDR013W"/>
<dbReference type="eggNOG" id="KOG3303">
    <property type="taxonomic scope" value="Eukaryota"/>
</dbReference>
<dbReference type="GeneTree" id="ENSGT00390000013968"/>
<dbReference type="HOGENOM" id="CLU_079191_0_0_1"/>
<dbReference type="InParanoid" id="Q12488"/>
<dbReference type="OMA" id="MFCEKAT"/>
<dbReference type="OrthoDB" id="10252587at2759"/>
<dbReference type="BioCyc" id="YEAST:G3O-29632-MONOMER"/>
<dbReference type="Reactome" id="R-SCE-176974">
    <property type="pathway name" value="Unwinding of DNA"/>
</dbReference>
<dbReference type="BioGRID-ORCS" id="851576">
    <property type="hits" value="0 hits in 10 CRISPR screens"/>
</dbReference>
<dbReference type="PRO" id="PR:Q12488"/>
<dbReference type="Proteomes" id="UP000002311">
    <property type="component" value="Chromosome IV"/>
</dbReference>
<dbReference type="RNAct" id="Q12488">
    <property type="molecule type" value="protein"/>
</dbReference>
<dbReference type="GO" id="GO:0071162">
    <property type="term" value="C:CMG complex"/>
    <property type="evidence" value="ECO:0000314"/>
    <property type="project" value="SGD"/>
</dbReference>
<dbReference type="GO" id="GO:0031261">
    <property type="term" value="C:DNA replication preinitiation complex"/>
    <property type="evidence" value="ECO:0000315"/>
    <property type="project" value="SGD"/>
</dbReference>
<dbReference type="GO" id="GO:0000811">
    <property type="term" value="C:GINS complex"/>
    <property type="evidence" value="ECO:0000353"/>
    <property type="project" value="ComplexPortal"/>
</dbReference>
<dbReference type="GO" id="GO:0043596">
    <property type="term" value="C:nuclear replication fork"/>
    <property type="evidence" value="ECO:0000314"/>
    <property type="project" value="ComplexPortal"/>
</dbReference>
<dbReference type="GO" id="GO:0005634">
    <property type="term" value="C:nucleus"/>
    <property type="evidence" value="ECO:0000303"/>
    <property type="project" value="ComplexPortal"/>
</dbReference>
<dbReference type="GO" id="GO:1902983">
    <property type="term" value="P:DNA strand elongation involved in mitotic DNA replication"/>
    <property type="evidence" value="ECO:0000318"/>
    <property type="project" value="GO_Central"/>
</dbReference>
<dbReference type="GO" id="GO:0006261">
    <property type="term" value="P:DNA-templated DNA replication"/>
    <property type="evidence" value="ECO:0000315"/>
    <property type="project" value="SGD"/>
</dbReference>
<dbReference type="GO" id="GO:0000727">
    <property type="term" value="P:double-strand break repair via break-induced replication"/>
    <property type="evidence" value="ECO:0000315"/>
    <property type="project" value="SGD"/>
</dbReference>
<dbReference type="CDD" id="cd11710">
    <property type="entry name" value="GINS_A_psf1"/>
    <property type="match status" value="1"/>
</dbReference>
<dbReference type="CDD" id="cd21696">
    <property type="entry name" value="GINS_B_Psf1"/>
    <property type="match status" value="1"/>
</dbReference>
<dbReference type="FunFam" id="1.20.58.1030:FF:000003">
    <property type="entry name" value="DNA replication complex GINS protein PSF1"/>
    <property type="match status" value="1"/>
</dbReference>
<dbReference type="Gene3D" id="1.20.58.1030">
    <property type="match status" value="1"/>
</dbReference>
<dbReference type="InterPro" id="IPR021151">
    <property type="entry name" value="GINS_A"/>
</dbReference>
<dbReference type="InterPro" id="IPR036224">
    <property type="entry name" value="GINS_bundle-like_dom_sf"/>
</dbReference>
<dbReference type="InterPro" id="IPR005339">
    <property type="entry name" value="GINS_Psf1"/>
</dbReference>
<dbReference type="InterPro" id="IPR056783">
    <property type="entry name" value="PSF1_C"/>
</dbReference>
<dbReference type="PANTHER" id="PTHR12914:SF2">
    <property type="entry name" value="DNA REPLICATION COMPLEX GINS PROTEIN PSF1"/>
    <property type="match status" value="1"/>
</dbReference>
<dbReference type="PANTHER" id="PTHR12914">
    <property type="entry name" value="PARTNER OF SLD5"/>
    <property type="match status" value="1"/>
</dbReference>
<dbReference type="Pfam" id="PF24997">
    <property type="entry name" value="PSF1_C"/>
    <property type="match status" value="1"/>
</dbReference>
<dbReference type="Pfam" id="PF05916">
    <property type="entry name" value="Sld5"/>
    <property type="match status" value="1"/>
</dbReference>
<dbReference type="SUPFAM" id="SSF158573">
    <property type="entry name" value="GINS helical bundle-like"/>
    <property type="match status" value="1"/>
</dbReference>
<accession>Q12488</accession>
<accession>D6VRZ9</accession>
<name>PSF1_YEAST</name>
<comment type="function">
    <text evidence="1">Required for DNA replication. Functions as part of the GINS complex which plays an essential role in the initiation of DNA replication by binding to DNA replication origins and facilitating the assembly of the DNA replication machinery. Required for the chromatin binding of CDC45.</text>
</comment>
<comment type="subunit">
    <text evidence="3">Component of the GINS complex which is a heterotetramer of SLD5, PSF1, PSF2 and PSF3. Interacts with PSF2.</text>
</comment>
<comment type="interaction">
    <interactant intactId="EBI-22066">
        <id>Q12488</id>
    </interactant>
    <interactant intactId="EBI-5209">
        <id>Q01454</id>
        <label>CTF4</label>
    </interactant>
    <organismsDiffer>false</organismsDiffer>
    <experiments>7</experiments>
</comment>
<comment type="interaction">
    <interactant intactId="EBI-22066">
        <id>Q12488</id>
    </interactant>
    <interactant intactId="EBI-4326">
        <id>P30665</id>
        <label>MCM4</label>
    </interactant>
    <organismsDiffer>false</organismsDiffer>
    <experiments>6</experiments>
</comment>
<comment type="interaction">
    <interactant intactId="EBI-22066">
        <id>Q12488</id>
    </interactant>
    <interactant intactId="EBI-25936">
        <id>P40359</id>
        <label>PSF2</label>
    </interactant>
    <organismsDiffer>false</organismsDiffer>
    <experiments>5</experiments>
</comment>
<comment type="interaction">
    <interactant intactId="EBI-22066">
        <id>Q12488</id>
    </interactant>
    <interactant intactId="EBI-37437">
        <id>Q03406</id>
        <label>SLD5</label>
    </interactant>
    <organismsDiffer>false</organismsDiffer>
    <experiments>6</experiments>
</comment>
<comment type="subcellular location">
    <subcellularLocation>
        <location evidence="1">Nucleus</location>
    </subcellularLocation>
    <text>Associates with autonomously replicating sequence (ARS) regions in S phase. This association requires SLD3 and DPB11.</text>
</comment>
<comment type="miscellaneous">
    <text evidence="2">Present with 1431 molecules/cell in log phase SD medium.</text>
</comment>
<comment type="similarity">
    <text evidence="4">Belongs to the GINS1/PSF1 family.</text>
</comment>
<reference key="1">
    <citation type="journal article" date="2003" name="Genes Dev.">
        <title>GINS, a novel multiprotein complex required for chromosomal DNA replication in budding yeast.</title>
        <authorList>
            <person name="Takayama Y."/>
            <person name="Kamimura Y."/>
            <person name="Okawa M."/>
            <person name="Muramatsu S."/>
            <person name="Sugino A."/>
            <person name="Araki H."/>
        </authorList>
    </citation>
    <scope>NUCLEOTIDE SEQUENCE [GENOMIC DNA]</scope>
    <scope>FUNCTION</scope>
    <scope>INTERACTION WITH DPB11 AND SLD3</scope>
    <scope>COMPOSITION OF THE GINS COMPLEX</scope>
    <scope>SUBCELLULAR LOCATION</scope>
    <scope>MUTAGENESIS OF ARG-84</scope>
</reference>
<reference key="2">
    <citation type="journal article" date="1996" name="Yeast">
        <title>Sequencing and analysis of a 35.4 kb region on the right arm of chromosome IV from Saccharomyces cerevisiae reveal 23 open reading frames.</title>
        <authorList>
            <person name="Eide L.G."/>
            <person name="Sander C."/>
            <person name="Prydz H."/>
        </authorList>
    </citation>
    <scope>NUCLEOTIDE SEQUENCE [GENOMIC DNA]</scope>
</reference>
<reference key="3">
    <citation type="journal article" date="1997" name="Nature">
        <title>The nucleotide sequence of Saccharomyces cerevisiae chromosome IV.</title>
        <authorList>
            <person name="Jacq C."/>
            <person name="Alt-Moerbe J."/>
            <person name="Andre B."/>
            <person name="Arnold W."/>
            <person name="Bahr A."/>
            <person name="Ballesta J.P.G."/>
            <person name="Bargues M."/>
            <person name="Baron L."/>
            <person name="Becker A."/>
            <person name="Biteau N."/>
            <person name="Bloecker H."/>
            <person name="Blugeon C."/>
            <person name="Boskovic J."/>
            <person name="Brandt P."/>
            <person name="Brueckner M."/>
            <person name="Buitrago M.J."/>
            <person name="Coster F."/>
            <person name="Delaveau T."/>
            <person name="del Rey F."/>
            <person name="Dujon B."/>
            <person name="Eide L.G."/>
            <person name="Garcia-Cantalejo J.M."/>
            <person name="Goffeau A."/>
            <person name="Gomez-Peris A."/>
            <person name="Granotier C."/>
            <person name="Hanemann V."/>
            <person name="Hankeln T."/>
            <person name="Hoheisel J.D."/>
            <person name="Jaeger W."/>
            <person name="Jimenez A."/>
            <person name="Jonniaux J.-L."/>
            <person name="Kraemer C."/>
            <person name="Kuester H."/>
            <person name="Laamanen P."/>
            <person name="Legros Y."/>
            <person name="Louis E.J."/>
            <person name="Moeller-Rieker S."/>
            <person name="Monnet A."/>
            <person name="Moro M."/>
            <person name="Mueller-Auer S."/>
            <person name="Nussbaumer B."/>
            <person name="Paricio N."/>
            <person name="Paulin L."/>
            <person name="Perea J."/>
            <person name="Perez-Alonso M."/>
            <person name="Perez-Ortin J.E."/>
            <person name="Pohl T.M."/>
            <person name="Prydz H."/>
            <person name="Purnelle B."/>
            <person name="Rasmussen S.W."/>
            <person name="Remacha M.A."/>
            <person name="Revuelta J.L."/>
            <person name="Rieger M."/>
            <person name="Salom D."/>
            <person name="Saluz H.P."/>
            <person name="Saiz J.E."/>
            <person name="Saren A.-M."/>
            <person name="Schaefer M."/>
            <person name="Scharfe M."/>
            <person name="Schmidt E.R."/>
            <person name="Schneider C."/>
            <person name="Scholler P."/>
            <person name="Schwarz S."/>
            <person name="Soler-Mira A."/>
            <person name="Urrestarazu L.A."/>
            <person name="Verhasselt P."/>
            <person name="Vissers S."/>
            <person name="Voet M."/>
            <person name="Volckaert G."/>
            <person name="Wagner G."/>
            <person name="Wambutt R."/>
            <person name="Wedler E."/>
            <person name="Wedler H."/>
            <person name="Woelfl S."/>
            <person name="Harris D.E."/>
            <person name="Bowman S."/>
            <person name="Brown D."/>
            <person name="Churcher C.M."/>
            <person name="Connor R."/>
            <person name="Dedman K."/>
            <person name="Gentles S."/>
            <person name="Hamlin N."/>
            <person name="Hunt S."/>
            <person name="Jones L."/>
            <person name="McDonald S."/>
            <person name="Murphy L.D."/>
            <person name="Niblett D."/>
            <person name="Odell C."/>
            <person name="Oliver K."/>
            <person name="Rajandream M.A."/>
            <person name="Richards C."/>
            <person name="Shore L."/>
            <person name="Walsh S.V."/>
            <person name="Barrell B.G."/>
            <person name="Dietrich F.S."/>
            <person name="Mulligan J.T."/>
            <person name="Allen E."/>
            <person name="Araujo R."/>
            <person name="Aviles E."/>
            <person name="Berno A."/>
            <person name="Carpenter J."/>
            <person name="Chen E."/>
            <person name="Cherry J.M."/>
            <person name="Chung E."/>
            <person name="Duncan M."/>
            <person name="Hunicke-Smith S."/>
            <person name="Hyman R.W."/>
            <person name="Komp C."/>
            <person name="Lashkari D."/>
            <person name="Lew H."/>
            <person name="Lin D."/>
            <person name="Mosedale D."/>
            <person name="Nakahara K."/>
            <person name="Namath A."/>
            <person name="Oefner P."/>
            <person name="Oh C."/>
            <person name="Petel F.X."/>
            <person name="Roberts D."/>
            <person name="Schramm S."/>
            <person name="Schroeder M."/>
            <person name="Shogren T."/>
            <person name="Shroff N."/>
            <person name="Winant A."/>
            <person name="Yelton M.A."/>
            <person name="Botstein D."/>
            <person name="Davis R.W."/>
            <person name="Johnston M."/>
            <person name="Andrews S."/>
            <person name="Brinkman R."/>
            <person name="Cooper J."/>
            <person name="Ding H."/>
            <person name="Du Z."/>
            <person name="Favello A."/>
            <person name="Fulton L."/>
            <person name="Gattung S."/>
            <person name="Greco T."/>
            <person name="Hallsworth K."/>
            <person name="Hawkins J."/>
            <person name="Hillier L.W."/>
            <person name="Jier M."/>
            <person name="Johnson D."/>
            <person name="Johnston L."/>
            <person name="Kirsten J."/>
            <person name="Kucaba T."/>
            <person name="Langston Y."/>
            <person name="Latreille P."/>
            <person name="Le T."/>
            <person name="Mardis E."/>
            <person name="Menezes S."/>
            <person name="Miller N."/>
            <person name="Nhan M."/>
            <person name="Pauley A."/>
            <person name="Peluso D."/>
            <person name="Rifkin L."/>
            <person name="Riles L."/>
            <person name="Taich A."/>
            <person name="Trevaskis E."/>
            <person name="Vignati D."/>
            <person name="Wilcox L."/>
            <person name="Wohldman P."/>
            <person name="Vaudin M."/>
            <person name="Wilson R."/>
            <person name="Waterston R."/>
            <person name="Albermann K."/>
            <person name="Hani J."/>
            <person name="Heumann K."/>
            <person name="Kleine K."/>
            <person name="Mewes H.-W."/>
            <person name="Zollner A."/>
            <person name="Zaccaria P."/>
        </authorList>
    </citation>
    <scope>NUCLEOTIDE SEQUENCE [LARGE SCALE GENOMIC DNA]</scope>
    <source>
        <strain>ATCC 204508 / S288c</strain>
    </source>
</reference>
<reference key="4">
    <citation type="journal article" date="2014" name="G3 (Bethesda)">
        <title>The reference genome sequence of Saccharomyces cerevisiae: Then and now.</title>
        <authorList>
            <person name="Engel S.R."/>
            <person name="Dietrich F.S."/>
            <person name="Fisk D.G."/>
            <person name="Binkley G."/>
            <person name="Balakrishnan R."/>
            <person name="Costanzo M.C."/>
            <person name="Dwight S.S."/>
            <person name="Hitz B.C."/>
            <person name="Karra K."/>
            <person name="Nash R.S."/>
            <person name="Weng S."/>
            <person name="Wong E.D."/>
            <person name="Lloyd P."/>
            <person name="Skrzypek M.S."/>
            <person name="Miyasato S.R."/>
            <person name="Simison M."/>
            <person name="Cherry J.M."/>
        </authorList>
    </citation>
    <scope>GENOME REANNOTATION</scope>
    <source>
        <strain>ATCC 204508 / S288c</strain>
    </source>
</reference>
<reference key="5">
    <citation type="journal article" date="2007" name="Genome Res.">
        <title>Approaching a complete repository of sequence-verified protein-encoding clones for Saccharomyces cerevisiae.</title>
        <authorList>
            <person name="Hu Y."/>
            <person name="Rolfs A."/>
            <person name="Bhullar B."/>
            <person name="Murthy T.V.S."/>
            <person name="Zhu C."/>
            <person name="Berger M.F."/>
            <person name="Camargo A.A."/>
            <person name="Kelley F."/>
            <person name="McCarron S."/>
            <person name="Jepson D."/>
            <person name="Richardson A."/>
            <person name="Raphael J."/>
            <person name="Moreira D."/>
            <person name="Taycher E."/>
            <person name="Zuo D."/>
            <person name="Mohr S."/>
            <person name="Kane M.F."/>
            <person name="Williamson J."/>
            <person name="Simpson A.J.G."/>
            <person name="Bulyk M.L."/>
            <person name="Harlow E."/>
            <person name="Marsischky G."/>
            <person name="Kolodner R.D."/>
            <person name="LaBaer J."/>
        </authorList>
    </citation>
    <scope>NUCLEOTIDE SEQUENCE [GENOMIC DNA]</scope>
    <source>
        <strain>ATCC 204508 / S288c</strain>
    </source>
</reference>
<reference key="6">
    <citation type="journal article" date="2003" name="Mol. Cell">
        <title>Assigning function to yeast proteins by integration of technologies.</title>
        <authorList>
            <person name="Hazbun T.R."/>
            <person name="Malmstroem L."/>
            <person name="Anderson S."/>
            <person name="Graczyk B.J."/>
            <person name="Fox B."/>
            <person name="Riffle M."/>
            <person name="Sundin B.A."/>
            <person name="Aranda J.D."/>
            <person name="McDonald W.H."/>
            <person name="Chiu C.-H."/>
            <person name="Snydsman B.E."/>
            <person name="Bradley P."/>
            <person name="Muller E.G.D."/>
            <person name="Fields S."/>
            <person name="Baker D."/>
            <person name="Yates J.R. III"/>
            <person name="Davis T.N."/>
        </authorList>
    </citation>
    <scope>IDENTIFICATION BY MASS SPECTROMETRY</scope>
    <scope>INTERACTION WITH PSF2</scope>
</reference>
<reference key="7">
    <citation type="journal article" date="2003" name="Nature">
        <title>Global analysis of protein expression in yeast.</title>
        <authorList>
            <person name="Ghaemmaghami S."/>
            <person name="Huh W.-K."/>
            <person name="Bower K."/>
            <person name="Howson R.W."/>
            <person name="Belle A."/>
            <person name="Dephoure N."/>
            <person name="O'Shea E.K."/>
            <person name="Weissman J.S."/>
        </authorList>
    </citation>
    <scope>LEVEL OF PROTEIN EXPRESSION [LARGE SCALE ANALYSIS]</scope>
</reference>
<reference key="8">
    <citation type="journal article" date="2012" name="Proc. Natl. Acad. Sci. U.S.A.">
        <title>N-terminal acetylome analyses and functional insights of the N-terminal acetyltransferase NatB.</title>
        <authorList>
            <person name="Van Damme P."/>
            <person name="Lasa M."/>
            <person name="Polevoda B."/>
            <person name="Gazquez C."/>
            <person name="Elosegui-Artola A."/>
            <person name="Kim D.S."/>
            <person name="De Juan-Pardo E."/>
            <person name="Demeyer K."/>
            <person name="Hole K."/>
            <person name="Larrea E."/>
            <person name="Timmerman E."/>
            <person name="Prieto J."/>
            <person name="Arnesen T."/>
            <person name="Sherman F."/>
            <person name="Gevaert K."/>
            <person name="Aldabe R."/>
        </authorList>
    </citation>
    <scope>IDENTIFICATION BY MASS SPECTROMETRY [LARGE SCALE ANALYSIS]</scope>
</reference>
<proteinExistence type="evidence at protein level"/>
<organism>
    <name type="scientific">Saccharomyces cerevisiae (strain ATCC 204508 / S288c)</name>
    <name type="common">Baker's yeast</name>
    <dbReference type="NCBI Taxonomy" id="559292"/>
    <lineage>
        <taxon>Eukaryota</taxon>
        <taxon>Fungi</taxon>
        <taxon>Dikarya</taxon>
        <taxon>Ascomycota</taxon>
        <taxon>Saccharomycotina</taxon>
        <taxon>Saccharomycetes</taxon>
        <taxon>Saccharomycetales</taxon>
        <taxon>Saccharomycetaceae</taxon>
        <taxon>Saccharomyces</taxon>
    </lineage>
</organism>
<protein>
    <recommendedName>
        <fullName>DNA replication complex GINS protein PSF1</fullName>
    </recommendedName>
    <alternativeName>
        <fullName>Partner of Sld five 1</fullName>
    </alternativeName>
</protein>
<sequence length="208" mass="24204">MYGDLGNKLVLEAKRTKQLYARSNQDVNLPMYHEDIIRNILKEVSNLRKNTEYLKEQQQLGMLDDKVAKCQYFVTLLCMERNKRCLLAYQRLRTDILDSMAWNNNGLDLMSSITFSQQDTNNLSHQEQEYLKEYCDLITDLKSGDLVDIDLSGSLVPPSDVFIDVRVLKDAGEIQTEYGVFNLIKDSQFFVRQSDVERLIQQGYLQKI</sequence>
<keyword id="KW-0002">3D-structure</keyword>
<keyword id="KW-0131">Cell cycle</keyword>
<keyword id="KW-0235">DNA replication</keyword>
<keyword id="KW-0539">Nucleus</keyword>
<keyword id="KW-1185">Reference proteome</keyword>
<evidence type="ECO:0000269" key="1">
    <source>
    </source>
</evidence>
<evidence type="ECO:0000269" key="2">
    <source>
    </source>
</evidence>
<evidence type="ECO:0000269" key="3">
    <source>
    </source>
</evidence>
<evidence type="ECO:0000305" key="4"/>
<evidence type="ECO:0007829" key="5">
    <source>
        <dbReference type="PDB" id="7PMK"/>
    </source>
</evidence>